<sequence>MQVSVETTEGLGRRMTVQVPAERVENEVERRLKDLSGRVKMDGFRPGKVPVKVVRKQYGAQVRSEVLSEVVQQTYSEALEQESLRPAGNPHIEPKRTGEGEDLEYEASFDVLPEIEVAGLDQIQVERPQVEITDADLDNVLERLRKQHADYQEVDRAAQDEDRVVIDFHGTIDGEAFTGNSAEDAPLILGAGQLPEAFEQGLQGAKAGQELTVEHKFPDELAEPSIAGKTAVFQVTVKRVEEPQLPELDDDFAARLGIQEGGVEALREAVRGNLERERHQAVRQRLKRQVLDQLADQNELELPKSLIDGEIQALRQQSGASAEGELPESERSAYEDVASRRVKLGLLVNELVRSQGIQLDRERMMTQLREMAANSGQDPSEALQQIAQDRQMMQSLEASVIEEQVVDWLLEQVQTEDKTLSFDELMNSEDGDQASA</sequence>
<protein>
    <recommendedName>
        <fullName evidence="1">Trigger factor</fullName>
        <shortName evidence="1">TF</shortName>
        <ecNumber evidence="1">5.2.1.8</ecNumber>
    </recommendedName>
    <alternativeName>
        <fullName evidence="1">PPIase</fullName>
    </alternativeName>
</protein>
<gene>
    <name evidence="1" type="primary">tig</name>
    <name type="ordered locus">Hhal_0604</name>
</gene>
<proteinExistence type="inferred from homology"/>
<reference key="1">
    <citation type="submission" date="2006-12" db="EMBL/GenBank/DDBJ databases">
        <title>Complete sequence of Halorhodospira halophila SL1.</title>
        <authorList>
            <consortium name="US DOE Joint Genome Institute"/>
            <person name="Copeland A."/>
            <person name="Lucas S."/>
            <person name="Lapidus A."/>
            <person name="Barry K."/>
            <person name="Detter J.C."/>
            <person name="Glavina del Rio T."/>
            <person name="Hammon N."/>
            <person name="Israni S."/>
            <person name="Dalin E."/>
            <person name="Tice H."/>
            <person name="Pitluck S."/>
            <person name="Saunders E."/>
            <person name="Brettin T."/>
            <person name="Bruce D."/>
            <person name="Han C."/>
            <person name="Tapia R."/>
            <person name="Schmutz J."/>
            <person name="Larimer F."/>
            <person name="Land M."/>
            <person name="Hauser L."/>
            <person name="Kyrpides N."/>
            <person name="Mikhailova N."/>
            <person name="Hoff W."/>
            <person name="Richardson P."/>
        </authorList>
    </citation>
    <scope>NUCLEOTIDE SEQUENCE [LARGE SCALE GENOMIC DNA]</scope>
    <source>
        <strain>DSM 244 / SL1</strain>
    </source>
</reference>
<comment type="function">
    <text evidence="1">Involved in protein export. Acts as a chaperone by maintaining the newly synthesized protein in an open conformation. Functions as a peptidyl-prolyl cis-trans isomerase.</text>
</comment>
<comment type="catalytic activity">
    <reaction evidence="1">
        <text>[protein]-peptidylproline (omega=180) = [protein]-peptidylproline (omega=0)</text>
        <dbReference type="Rhea" id="RHEA:16237"/>
        <dbReference type="Rhea" id="RHEA-COMP:10747"/>
        <dbReference type="Rhea" id="RHEA-COMP:10748"/>
        <dbReference type="ChEBI" id="CHEBI:83833"/>
        <dbReference type="ChEBI" id="CHEBI:83834"/>
        <dbReference type="EC" id="5.2.1.8"/>
    </reaction>
</comment>
<comment type="subcellular location">
    <subcellularLocation>
        <location>Cytoplasm</location>
    </subcellularLocation>
    <text evidence="1">About half TF is bound to the ribosome near the polypeptide exit tunnel while the other half is free in the cytoplasm.</text>
</comment>
<comment type="domain">
    <text evidence="1">Consists of 3 domains; the N-terminus binds the ribosome, the middle domain has PPIase activity, while the C-terminus has intrinsic chaperone activity on its own.</text>
</comment>
<comment type="similarity">
    <text evidence="1">Belongs to the FKBP-type PPIase family. Tig subfamily.</text>
</comment>
<name>TIG_HALHL</name>
<keyword id="KW-0131">Cell cycle</keyword>
<keyword id="KW-0132">Cell division</keyword>
<keyword id="KW-0143">Chaperone</keyword>
<keyword id="KW-0963">Cytoplasm</keyword>
<keyword id="KW-0413">Isomerase</keyword>
<keyword id="KW-1185">Reference proteome</keyword>
<keyword id="KW-0697">Rotamase</keyword>
<organism>
    <name type="scientific">Halorhodospira halophila (strain DSM 244 / SL1)</name>
    <name type="common">Ectothiorhodospira halophila (strain DSM 244 / SL1)</name>
    <dbReference type="NCBI Taxonomy" id="349124"/>
    <lineage>
        <taxon>Bacteria</taxon>
        <taxon>Pseudomonadati</taxon>
        <taxon>Pseudomonadota</taxon>
        <taxon>Gammaproteobacteria</taxon>
        <taxon>Chromatiales</taxon>
        <taxon>Ectothiorhodospiraceae</taxon>
        <taxon>Halorhodospira</taxon>
    </lineage>
</organism>
<evidence type="ECO:0000255" key="1">
    <source>
        <dbReference type="HAMAP-Rule" id="MF_00303"/>
    </source>
</evidence>
<evidence type="ECO:0000256" key="2">
    <source>
        <dbReference type="SAM" id="MobiDB-lite"/>
    </source>
</evidence>
<dbReference type="EC" id="5.2.1.8" evidence="1"/>
<dbReference type="EMBL" id="CP000544">
    <property type="protein sequence ID" value="ABM61390.1"/>
    <property type="molecule type" value="Genomic_DNA"/>
</dbReference>
<dbReference type="RefSeq" id="WP_011813413.1">
    <property type="nucleotide sequence ID" value="NC_008789.1"/>
</dbReference>
<dbReference type="SMR" id="A1WUM8"/>
<dbReference type="STRING" id="349124.Hhal_0604"/>
<dbReference type="KEGG" id="hha:Hhal_0604"/>
<dbReference type="eggNOG" id="COG0544">
    <property type="taxonomic scope" value="Bacteria"/>
</dbReference>
<dbReference type="HOGENOM" id="CLU_033058_2_0_6"/>
<dbReference type="OrthoDB" id="9767721at2"/>
<dbReference type="Proteomes" id="UP000000647">
    <property type="component" value="Chromosome"/>
</dbReference>
<dbReference type="GO" id="GO:0005737">
    <property type="term" value="C:cytoplasm"/>
    <property type="evidence" value="ECO:0007669"/>
    <property type="project" value="UniProtKB-SubCell"/>
</dbReference>
<dbReference type="GO" id="GO:0003755">
    <property type="term" value="F:peptidyl-prolyl cis-trans isomerase activity"/>
    <property type="evidence" value="ECO:0007669"/>
    <property type="project" value="UniProtKB-UniRule"/>
</dbReference>
<dbReference type="GO" id="GO:0044183">
    <property type="term" value="F:protein folding chaperone"/>
    <property type="evidence" value="ECO:0007669"/>
    <property type="project" value="TreeGrafter"/>
</dbReference>
<dbReference type="GO" id="GO:0043022">
    <property type="term" value="F:ribosome binding"/>
    <property type="evidence" value="ECO:0007669"/>
    <property type="project" value="TreeGrafter"/>
</dbReference>
<dbReference type="GO" id="GO:0051083">
    <property type="term" value="P:'de novo' cotranslational protein folding"/>
    <property type="evidence" value="ECO:0007669"/>
    <property type="project" value="TreeGrafter"/>
</dbReference>
<dbReference type="GO" id="GO:0051301">
    <property type="term" value="P:cell division"/>
    <property type="evidence" value="ECO:0007669"/>
    <property type="project" value="UniProtKB-KW"/>
</dbReference>
<dbReference type="GO" id="GO:0061077">
    <property type="term" value="P:chaperone-mediated protein folding"/>
    <property type="evidence" value="ECO:0007669"/>
    <property type="project" value="TreeGrafter"/>
</dbReference>
<dbReference type="GO" id="GO:0015031">
    <property type="term" value="P:protein transport"/>
    <property type="evidence" value="ECO:0007669"/>
    <property type="project" value="UniProtKB-UniRule"/>
</dbReference>
<dbReference type="GO" id="GO:0043335">
    <property type="term" value="P:protein unfolding"/>
    <property type="evidence" value="ECO:0007669"/>
    <property type="project" value="TreeGrafter"/>
</dbReference>
<dbReference type="FunFam" id="3.10.50.40:FF:000001">
    <property type="entry name" value="Trigger factor"/>
    <property type="match status" value="1"/>
</dbReference>
<dbReference type="Gene3D" id="3.10.50.40">
    <property type="match status" value="1"/>
</dbReference>
<dbReference type="Gene3D" id="3.30.70.1050">
    <property type="entry name" value="Trigger factor ribosome-binding domain"/>
    <property type="match status" value="1"/>
</dbReference>
<dbReference type="Gene3D" id="1.10.3120.10">
    <property type="entry name" value="Trigger factor, C-terminal domain"/>
    <property type="match status" value="1"/>
</dbReference>
<dbReference type="HAMAP" id="MF_00303">
    <property type="entry name" value="Trigger_factor_Tig"/>
    <property type="match status" value="1"/>
</dbReference>
<dbReference type="InterPro" id="IPR046357">
    <property type="entry name" value="PPIase_dom_sf"/>
</dbReference>
<dbReference type="InterPro" id="IPR001179">
    <property type="entry name" value="PPIase_FKBP_dom"/>
</dbReference>
<dbReference type="InterPro" id="IPR005215">
    <property type="entry name" value="Trig_fac"/>
</dbReference>
<dbReference type="InterPro" id="IPR008880">
    <property type="entry name" value="Trigger_fac_C"/>
</dbReference>
<dbReference type="InterPro" id="IPR037041">
    <property type="entry name" value="Trigger_fac_C_sf"/>
</dbReference>
<dbReference type="InterPro" id="IPR008881">
    <property type="entry name" value="Trigger_fac_ribosome-bd_bac"/>
</dbReference>
<dbReference type="InterPro" id="IPR036611">
    <property type="entry name" value="Trigger_fac_ribosome-bd_sf"/>
</dbReference>
<dbReference type="InterPro" id="IPR027304">
    <property type="entry name" value="Trigger_fact/SurA_dom_sf"/>
</dbReference>
<dbReference type="NCBIfam" id="TIGR00115">
    <property type="entry name" value="tig"/>
    <property type="match status" value="1"/>
</dbReference>
<dbReference type="PANTHER" id="PTHR30560">
    <property type="entry name" value="TRIGGER FACTOR CHAPERONE AND PEPTIDYL-PROLYL CIS/TRANS ISOMERASE"/>
    <property type="match status" value="1"/>
</dbReference>
<dbReference type="PANTHER" id="PTHR30560:SF3">
    <property type="entry name" value="TRIGGER FACTOR-LIKE PROTEIN TIG, CHLOROPLASTIC"/>
    <property type="match status" value="1"/>
</dbReference>
<dbReference type="Pfam" id="PF00254">
    <property type="entry name" value="FKBP_C"/>
    <property type="match status" value="1"/>
</dbReference>
<dbReference type="Pfam" id="PF05698">
    <property type="entry name" value="Trigger_C"/>
    <property type="match status" value="1"/>
</dbReference>
<dbReference type="Pfam" id="PF05697">
    <property type="entry name" value="Trigger_N"/>
    <property type="match status" value="1"/>
</dbReference>
<dbReference type="PIRSF" id="PIRSF003095">
    <property type="entry name" value="Trigger_factor"/>
    <property type="match status" value="1"/>
</dbReference>
<dbReference type="SUPFAM" id="SSF54534">
    <property type="entry name" value="FKBP-like"/>
    <property type="match status" value="1"/>
</dbReference>
<dbReference type="SUPFAM" id="SSF109998">
    <property type="entry name" value="Triger factor/SurA peptide-binding domain-like"/>
    <property type="match status" value="1"/>
</dbReference>
<dbReference type="SUPFAM" id="SSF102735">
    <property type="entry name" value="Trigger factor ribosome-binding domain"/>
    <property type="match status" value="1"/>
</dbReference>
<dbReference type="PROSITE" id="PS50059">
    <property type="entry name" value="FKBP_PPIASE"/>
    <property type="match status" value="1"/>
</dbReference>
<feature type="chain" id="PRO_1000022688" description="Trigger factor">
    <location>
        <begin position="1"/>
        <end position="436"/>
    </location>
</feature>
<feature type="domain" description="PPIase FKBP-type" evidence="1">
    <location>
        <begin position="161"/>
        <end position="246"/>
    </location>
</feature>
<feature type="region of interest" description="Disordered" evidence="2">
    <location>
        <begin position="1"/>
        <end position="26"/>
    </location>
</feature>
<feature type="region of interest" description="Disordered" evidence="2">
    <location>
        <begin position="81"/>
        <end position="100"/>
    </location>
</feature>
<accession>A1WUM8</accession>